<evidence type="ECO:0000250" key="1"/>
<evidence type="ECO:0000255" key="2"/>
<evidence type="ECO:0000305" key="3"/>
<protein>
    <recommendedName>
        <fullName>Shikimate dehydrogenase</fullName>
        <ecNumber>1.1.1.25</ecNumber>
    </recommendedName>
</protein>
<dbReference type="EC" id="1.1.1.25"/>
<dbReference type="EMBL" id="CP000916">
    <property type="protein sequence ID" value="ACM22501.1"/>
    <property type="molecule type" value="Genomic_DNA"/>
</dbReference>
<dbReference type="RefSeq" id="WP_011943195.1">
    <property type="nucleotide sequence ID" value="NC_011978.1"/>
</dbReference>
<dbReference type="SMR" id="B9KBV5"/>
<dbReference type="STRING" id="309803.CTN_0325"/>
<dbReference type="KEGG" id="tna:CTN_0325"/>
<dbReference type="eggNOG" id="COG0169">
    <property type="taxonomic scope" value="Bacteria"/>
</dbReference>
<dbReference type="HOGENOM" id="CLU_044063_4_1_0"/>
<dbReference type="UniPathway" id="UPA00053">
    <property type="reaction ID" value="UER00087"/>
</dbReference>
<dbReference type="Proteomes" id="UP000000445">
    <property type="component" value="Chromosome"/>
</dbReference>
<dbReference type="GO" id="GO:0005829">
    <property type="term" value="C:cytosol"/>
    <property type="evidence" value="ECO:0007669"/>
    <property type="project" value="TreeGrafter"/>
</dbReference>
<dbReference type="GO" id="GO:0050661">
    <property type="term" value="F:NADP binding"/>
    <property type="evidence" value="ECO:0007669"/>
    <property type="project" value="TreeGrafter"/>
</dbReference>
<dbReference type="GO" id="GO:0004764">
    <property type="term" value="F:shikimate 3-dehydrogenase (NADP+) activity"/>
    <property type="evidence" value="ECO:0007669"/>
    <property type="project" value="UniProtKB-UniRule"/>
</dbReference>
<dbReference type="GO" id="GO:0008652">
    <property type="term" value="P:amino acid biosynthetic process"/>
    <property type="evidence" value="ECO:0007669"/>
    <property type="project" value="UniProtKB-KW"/>
</dbReference>
<dbReference type="GO" id="GO:0009073">
    <property type="term" value="P:aromatic amino acid family biosynthetic process"/>
    <property type="evidence" value="ECO:0007669"/>
    <property type="project" value="UniProtKB-KW"/>
</dbReference>
<dbReference type="GO" id="GO:0009423">
    <property type="term" value="P:chorismate biosynthetic process"/>
    <property type="evidence" value="ECO:0007669"/>
    <property type="project" value="UniProtKB-UniRule"/>
</dbReference>
<dbReference type="GO" id="GO:0019632">
    <property type="term" value="P:shikimate metabolic process"/>
    <property type="evidence" value="ECO:0007669"/>
    <property type="project" value="TreeGrafter"/>
</dbReference>
<dbReference type="CDD" id="cd01065">
    <property type="entry name" value="NAD_bind_Shikimate_DH"/>
    <property type="match status" value="1"/>
</dbReference>
<dbReference type="Gene3D" id="3.40.50.10860">
    <property type="entry name" value="Leucine Dehydrogenase, chain A, domain 1"/>
    <property type="match status" value="1"/>
</dbReference>
<dbReference type="Gene3D" id="3.40.50.720">
    <property type="entry name" value="NAD(P)-binding Rossmann-like Domain"/>
    <property type="match status" value="1"/>
</dbReference>
<dbReference type="InterPro" id="IPR046346">
    <property type="entry name" value="Aminoacid_DH-like_N_sf"/>
</dbReference>
<dbReference type="InterPro" id="IPR036291">
    <property type="entry name" value="NAD(P)-bd_dom_sf"/>
</dbReference>
<dbReference type="InterPro" id="IPR013708">
    <property type="entry name" value="Shikimate_DH-bd_N"/>
</dbReference>
<dbReference type="InterPro" id="IPR022893">
    <property type="entry name" value="Shikimate_DH_fam"/>
</dbReference>
<dbReference type="InterPro" id="IPR006151">
    <property type="entry name" value="Shikm_DH/Glu-tRNA_Rdtase"/>
</dbReference>
<dbReference type="PANTHER" id="PTHR21089:SF1">
    <property type="entry name" value="BIFUNCTIONAL 3-DEHYDROQUINATE DEHYDRATASE_SHIKIMATE DEHYDROGENASE, CHLOROPLASTIC"/>
    <property type="match status" value="1"/>
</dbReference>
<dbReference type="PANTHER" id="PTHR21089">
    <property type="entry name" value="SHIKIMATE DEHYDROGENASE"/>
    <property type="match status" value="1"/>
</dbReference>
<dbReference type="Pfam" id="PF01488">
    <property type="entry name" value="Shikimate_DH"/>
    <property type="match status" value="1"/>
</dbReference>
<dbReference type="Pfam" id="PF08501">
    <property type="entry name" value="Shikimate_dh_N"/>
    <property type="match status" value="1"/>
</dbReference>
<dbReference type="SUPFAM" id="SSF53223">
    <property type="entry name" value="Aminoacid dehydrogenase-like, N-terminal domain"/>
    <property type="match status" value="1"/>
</dbReference>
<dbReference type="SUPFAM" id="SSF51735">
    <property type="entry name" value="NAD(P)-binding Rossmann-fold domains"/>
    <property type="match status" value="1"/>
</dbReference>
<proteinExistence type="inferred from homology"/>
<comment type="catalytic activity">
    <reaction>
        <text>shikimate + NADP(+) = 3-dehydroshikimate + NADPH + H(+)</text>
        <dbReference type="Rhea" id="RHEA:17737"/>
        <dbReference type="ChEBI" id="CHEBI:15378"/>
        <dbReference type="ChEBI" id="CHEBI:16630"/>
        <dbReference type="ChEBI" id="CHEBI:36208"/>
        <dbReference type="ChEBI" id="CHEBI:57783"/>
        <dbReference type="ChEBI" id="CHEBI:58349"/>
        <dbReference type="EC" id="1.1.1.25"/>
    </reaction>
</comment>
<comment type="pathway">
    <text>Metabolic intermediate biosynthesis; chorismate biosynthesis; chorismate from D-erythrose 4-phosphate and phosphoenolpyruvate: step 4/7.</text>
</comment>
<comment type="similarity">
    <text evidence="3">Belongs to the shikimate dehydrogenase family.</text>
</comment>
<accession>B9KBV5</accession>
<organism>
    <name type="scientific">Thermotoga neapolitana (strain ATCC 49049 / DSM 4359 / NBRC 107923 / NS-E)</name>
    <dbReference type="NCBI Taxonomy" id="309803"/>
    <lineage>
        <taxon>Bacteria</taxon>
        <taxon>Thermotogati</taxon>
        <taxon>Thermotogota</taxon>
        <taxon>Thermotogae</taxon>
        <taxon>Thermotogales</taxon>
        <taxon>Thermotogaceae</taxon>
        <taxon>Thermotoga</taxon>
    </lineage>
</organism>
<name>AROE_THENN</name>
<gene>
    <name type="primary">aroE</name>
    <name type="ordered locus">CTN_0325</name>
</gene>
<feature type="chain" id="PRO_1000124901" description="Shikimate dehydrogenase">
    <location>
        <begin position="1"/>
        <end position="253"/>
    </location>
</feature>
<feature type="active site" description="Proton acceptor" evidence="2">
    <location>
        <position position="63"/>
    </location>
</feature>
<feature type="binding site" evidence="1">
    <location>
        <begin position="115"/>
        <end position="119"/>
    </location>
    <ligand>
        <name>NADP(+)</name>
        <dbReference type="ChEBI" id="CHEBI:58349"/>
    </ligand>
</feature>
<keyword id="KW-0028">Amino-acid biosynthesis</keyword>
<keyword id="KW-0057">Aromatic amino acid biosynthesis</keyword>
<keyword id="KW-0521">NADP</keyword>
<keyword id="KW-0560">Oxidoreductase</keyword>
<reference key="1">
    <citation type="submission" date="2007-11" db="EMBL/GenBank/DDBJ databases">
        <title>The genome sequence of the hyperthermophilic bacterium Thermotoga neapolitana.</title>
        <authorList>
            <person name="Lim S.K."/>
            <person name="Kim J.S."/>
            <person name="Cha S.H."/>
            <person name="Park B.C."/>
            <person name="Lee D.S."/>
            <person name="Tae H.S."/>
            <person name="Kim S.-J."/>
            <person name="Kim J.J."/>
            <person name="Park K.J."/>
            <person name="Lee S.Y."/>
        </authorList>
    </citation>
    <scope>NUCLEOTIDE SEQUENCE [LARGE SCALE GENOMIC DNA]</scope>
    <source>
        <strain>ATCC 49049 / DSM 4359 / NBRC 107923 / NS-E</strain>
    </source>
</reference>
<sequence length="253" mass="28874">MKFCIIGYPVSHSISPRLYNEYFKRAGMNHSYGMEEIPPESFDTEIRRILEEYDGFNATIPHKERVMRYVEPSEDAQRIKAVNCVFRGKGYNTDWVGVVKSLEGVEVKEPVVVVGAGGAARAVIYALLQMGVKDIWVVNRTIERAKALDFPVKIFSLDQLDEVVKKAKSLFNTTSVGMKGEKLTVSEASLKGLYLVYDVVYFETPLVSDAKRLGVEHVVKGNLMFYYQAMENLKIWGIYDERSFKEVFEEVLR</sequence>